<keyword id="KW-0221">Differentiation</keyword>
<keyword id="KW-0472">Membrane</keyword>
<keyword id="KW-1185">Reference proteome</keyword>
<keyword id="KW-0744">Spermatogenesis</keyword>
<keyword id="KW-0812">Transmembrane</keyword>
<keyword id="KW-1133">Transmembrane helix</keyword>
<name>S31A3_HUMAN</name>
<reference key="1">
    <citation type="journal article" date="2004" name="Nature">
        <title>DNA sequence and analysis of human chromosome 9.</title>
        <authorList>
            <person name="Humphray S.J."/>
            <person name="Oliver K."/>
            <person name="Hunt A.R."/>
            <person name="Plumb R.W."/>
            <person name="Loveland J.E."/>
            <person name="Howe K.L."/>
            <person name="Andrews T.D."/>
            <person name="Searle S."/>
            <person name="Hunt S.E."/>
            <person name="Scott C.E."/>
            <person name="Jones M.C."/>
            <person name="Ainscough R."/>
            <person name="Almeida J.P."/>
            <person name="Ambrose K.D."/>
            <person name="Ashwell R.I.S."/>
            <person name="Babbage A.K."/>
            <person name="Babbage S."/>
            <person name="Bagguley C.L."/>
            <person name="Bailey J."/>
            <person name="Banerjee R."/>
            <person name="Barker D.J."/>
            <person name="Barlow K.F."/>
            <person name="Bates K."/>
            <person name="Beasley H."/>
            <person name="Beasley O."/>
            <person name="Bird C.P."/>
            <person name="Bray-Allen S."/>
            <person name="Brown A.J."/>
            <person name="Brown J.Y."/>
            <person name="Burford D."/>
            <person name="Burrill W."/>
            <person name="Burton J."/>
            <person name="Carder C."/>
            <person name="Carter N.P."/>
            <person name="Chapman J.C."/>
            <person name="Chen Y."/>
            <person name="Clarke G."/>
            <person name="Clark S.Y."/>
            <person name="Clee C.M."/>
            <person name="Clegg S."/>
            <person name="Collier R.E."/>
            <person name="Corby N."/>
            <person name="Crosier M."/>
            <person name="Cummings A.T."/>
            <person name="Davies J."/>
            <person name="Dhami P."/>
            <person name="Dunn M."/>
            <person name="Dutta I."/>
            <person name="Dyer L.W."/>
            <person name="Earthrowl M.E."/>
            <person name="Faulkner L."/>
            <person name="Fleming C.J."/>
            <person name="Frankish A."/>
            <person name="Frankland J.A."/>
            <person name="French L."/>
            <person name="Fricker D.G."/>
            <person name="Garner P."/>
            <person name="Garnett J."/>
            <person name="Ghori J."/>
            <person name="Gilbert J.G.R."/>
            <person name="Glison C."/>
            <person name="Grafham D.V."/>
            <person name="Gribble S."/>
            <person name="Griffiths C."/>
            <person name="Griffiths-Jones S."/>
            <person name="Grocock R."/>
            <person name="Guy J."/>
            <person name="Hall R.E."/>
            <person name="Hammond S."/>
            <person name="Harley J.L."/>
            <person name="Harrison E.S.I."/>
            <person name="Hart E.A."/>
            <person name="Heath P.D."/>
            <person name="Henderson C.D."/>
            <person name="Hopkins B.L."/>
            <person name="Howard P.J."/>
            <person name="Howden P.J."/>
            <person name="Huckle E."/>
            <person name="Johnson C."/>
            <person name="Johnson D."/>
            <person name="Joy A.A."/>
            <person name="Kay M."/>
            <person name="Keenan S."/>
            <person name="Kershaw J.K."/>
            <person name="Kimberley A.M."/>
            <person name="King A."/>
            <person name="Knights A."/>
            <person name="Laird G.K."/>
            <person name="Langford C."/>
            <person name="Lawlor S."/>
            <person name="Leongamornlert D.A."/>
            <person name="Leversha M."/>
            <person name="Lloyd C."/>
            <person name="Lloyd D.M."/>
            <person name="Lovell J."/>
            <person name="Martin S."/>
            <person name="Mashreghi-Mohammadi M."/>
            <person name="Matthews L."/>
            <person name="McLaren S."/>
            <person name="McLay K.E."/>
            <person name="McMurray A."/>
            <person name="Milne S."/>
            <person name="Nickerson T."/>
            <person name="Nisbett J."/>
            <person name="Nordsiek G."/>
            <person name="Pearce A.V."/>
            <person name="Peck A.I."/>
            <person name="Porter K.M."/>
            <person name="Pandian R."/>
            <person name="Pelan S."/>
            <person name="Phillimore B."/>
            <person name="Povey S."/>
            <person name="Ramsey Y."/>
            <person name="Rand V."/>
            <person name="Scharfe M."/>
            <person name="Sehra H.K."/>
            <person name="Shownkeen R."/>
            <person name="Sims S.K."/>
            <person name="Skuce C.D."/>
            <person name="Smith M."/>
            <person name="Steward C.A."/>
            <person name="Swarbreck D."/>
            <person name="Sycamore N."/>
            <person name="Tester J."/>
            <person name="Thorpe A."/>
            <person name="Tracey A."/>
            <person name="Tromans A."/>
            <person name="Thomas D.W."/>
            <person name="Wall M."/>
            <person name="Wallis J.M."/>
            <person name="West A.P."/>
            <person name="Whitehead S.L."/>
            <person name="Willey D.L."/>
            <person name="Williams S.A."/>
            <person name="Wilming L."/>
            <person name="Wray P.W."/>
            <person name="Young L."/>
            <person name="Ashurst J.L."/>
            <person name="Coulson A."/>
            <person name="Blocker H."/>
            <person name="Durbin R.M."/>
            <person name="Sulston J.E."/>
            <person name="Hubbard T."/>
            <person name="Jackson M.J."/>
            <person name="Bentley D.R."/>
            <person name="Beck S."/>
            <person name="Rogers J."/>
            <person name="Dunham I."/>
        </authorList>
    </citation>
    <scope>NUCLEOTIDE SEQUENCE [LARGE SCALE GENOMIC DNA]</scope>
</reference>
<reference key="2">
    <citation type="journal article" date="2007" name="BMC Genomics">
        <title>The full-ORF clone resource of the German cDNA consortium.</title>
        <authorList>
            <person name="Bechtel S."/>
            <person name="Rosenfelder H."/>
            <person name="Duda A."/>
            <person name="Schmidt C.P."/>
            <person name="Ernst U."/>
            <person name="Wellenreuther R."/>
            <person name="Mehrle A."/>
            <person name="Schuster C."/>
            <person name="Bahr A."/>
            <person name="Bloecker H."/>
            <person name="Heubner D."/>
            <person name="Hoerlein A."/>
            <person name="Michel G."/>
            <person name="Wedler H."/>
            <person name="Koehrer K."/>
            <person name="Ottenwaelder B."/>
            <person name="Poustka A."/>
            <person name="Wiemann S."/>
            <person name="Schupp I."/>
        </authorList>
    </citation>
    <scope>NUCLEOTIDE SEQUENCE [LARGE SCALE MRNA] OF 340-1347</scope>
    <source>
        <tissue>Testis</tissue>
    </source>
</reference>
<sequence>MENLPFPLKLLSASSLNAPSSTPWVLDIFLTLVFALGFFFLLLPYLSYFRCDDPPSPSPGKRKCPVGRRRRPRGRMKNHSLRAGRECRRGLEETSDLLSQLQSLLGPHLDKGDFGQLSGPDPPGEVGERAPDGASQSSHEPMEDAAPILSLLASPDPQAKHPQDLASTPSPGPMTTSVSSLSASQPPEPSLPLEHPSPEPPALFPHPPHTPDPLACSLPPPKGFTAPPLRDSTLITPSHCDSVALPLGTVPQSLSPHEDLVASVPAISGLGGSNSHVSASSRWQETARTSCAFNSSVQQDHLSRHPPETCQMEAGSLFLLSSDGQNVVGIQVTETAKVNIWEEKENVGSFTNRMTPEKHLNSLRNLAKSLDAEQDTTNPKPFWNMGENSKQLPGPQKLSDPRLWQESFWKNYSQLFWGLPSLHSESLVANAWVTDRSYTLQSPPFLFNEMSNVCPIQRETTMSPLLFQAQPLSHLGPECQPFISSTPQFRPTPMAQAEAQAHLQSSFPVLSPAFPSLIQNTGVACPASQNKVQALSLPETQHPEWPLLRRQLEGRLALPSRVQKSQDVFSVSTPNLPQESLTSILPENFPVSPELRRQLEQHIKKWIIQHWGNLGRIQESLDLMQLQDESPGTSQAKGKPSPWQSSMSTGESSKEAQKVKFQLERDPCPHLGQILGETPQNLSRDMKSFPRKVLGVTSEELERNLRKPLRSDSGSDLLRCTERTHIENILKAHMGRNLGQTNEGLIPVRVRRSWLAVNQALPVSNTHVKTSNLAAPKSGKACVNTAQVLSFLEPCTQQGLGAHIVRFWAKHRWGLPLRVLKPIQCFKLEKVSSLSLTQLAGPSSATCESGAGSEVEVDMFLRKPPMASLRKQVLTKASDHMPESLLASSPAWKQFQRAPRGIPSWNDHEPLKPPPAGQEGRWPSKPLTYSLTGSTQQSRSLGAQSSKAGETREAVPQCRVPLETCMLANLQATSEDVHGFEAPGTSKSSLHPRVSVSQDPRKLCLMEEVVSEFEPGMATKSETQPQVCAAVVLLPDGQASVVPHASENLVSQVPQGHLQSMPTGNMRASQELHDLMAARRSKLVHEEPRKPNCQGSCKSQRPMFPPIHKSEKFRKPNLEKHEERLEGLRTPQLTPVRKTEDTHQDEGVQLLPSKKQPPSVSPFGENIKQIFQWIFSKKKSKPAPVTAESQKTVKNRSCVYSSSAEAQGLMTAVGQMLDEKMSLCHARHASKVNQHKQKFQAPVCGFPCNHRHLFYSEHGRILSYAASSQQATLKSQGCPNRDRQIRNQQPLKSVRCNNEQWGLRHPQILHPKKAVSPVSPPQHWPKTSGASSHHHHCPRHCLLWEGI</sequence>
<gene>
    <name type="primary">SPATA31A3</name>
    <name type="synonym">FAM75A3</name>
</gene>
<feature type="chain" id="PRO_0000313018" description="Spermatogenesis-associated protein 31A3">
    <location>
        <begin position="1"/>
        <end position="1347"/>
    </location>
</feature>
<feature type="transmembrane region" description="Helical" evidence="2">
    <location>
        <begin position="23"/>
        <end position="43"/>
    </location>
</feature>
<feature type="region of interest" description="Disordered" evidence="3">
    <location>
        <begin position="55"/>
        <end position="87"/>
    </location>
</feature>
<feature type="region of interest" description="Disordered" evidence="3">
    <location>
        <begin position="108"/>
        <end position="142"/>
    </location>
</feature>
<feature type="region of interest" description="Disordered" evidence="3">
    <location>
        <begin position="154"/>
        <end position="235"/>
    </location>
</feature>
<feature type="region of interest" description="Disordered" evidence="3">
    <location>
        <begin position="373"/>
        <end position="397"/>
    </location>
</feature>
<feature type="region of interest" description="Disordered" evidence="3">
    <location>
        <begin position="627"/>
        <end position="658"/>
    </location>
</feature>
<feature type="region of interest" description="Disordered" evidence="3">
    <location>
        <begin position="900"/>
        <end position="955"/>
    </location>
</feature>
<feature type="region of interest" description="Disordered" evidence="3">
    <location>
        <begin position="1084"/>
        <end position="1161"/>
    </location>
</feature>
<feature type="region of interest" description="Disordered" evidence="3">
    <location>
        <begin position="1313"/>
        <end position="1335"/>
    </location>
</feature>
<feature type="compositionally biased region" description="Basic residues" evidence="3">
    <location>
        <begin position="60"/>
        <end position="82"/>
    </location>
</feature>
<feature type="compositionally biased region" description="Polar residues" evidence="3">
    <location>
        <begin position="165"/>
        <end position="178"/>
    </location>
</feature>
<feature type="compositionally biased region" description="Pro residues" evidence="3">
    <location>
        <begin position="198"/>
        <end position="211"/>
    </location>
</feature>
<feature type="compositionally biased region" description="Polar residues" evidence="3">
    <location>
        <begin position="627"/>
        <end position="651"/>
    </location>
</feature>
<feature type="compositionally biased region" description="Polar residues" evidence="3">
    <location>
        <begin position="927"/>
        <end position="948"/>
    </location>
</feature>
<feature type="compositionally biased region" description="Basic and acidic residues" evidence="3">
    <location>
        <begin position="1108"/>
        <end position="1127"/>
    </location>
</feature>
<feature type="compositionally biased region" description="Basic and acidic residues" evidence="3">
    <location>
        <begin position="1137"/>
        <end position="1146"/>
    </location>
</feature>
<feature type="sequence conflict" description="In Ref. 2; CAB45741." evidence="4" ref="2">
    <original>P</original>
    <variation>Q</variation>
    <location>
        <position position="1152"/>
    </location>
</feature>
<proteinExistence type="evidence at transcript level"/>
<protein>
    <recommendedName>
        <fullName>Spermatogenesis-associated protein 31A3</fullName>
    </recommendedName>
    <alternativeName>
        <fullName>Protein FAM75A3</fullName>
    </alternativeName>
</protein>
<comment type="function">
    <text evidence="1">May play a role in spermatogenesis.</text>
</comment>
<comment type="subcellular location">
    <subcellularLocation>
        <location evidence="4">Membrane</location>
        <topology evidence="4">Single-pass membrane protein</topology>
    </subcellularLocation>
</comment>
<comment type="similarity">
    <text evidence="4">Belongs to the SPATA31 family.</text>
</comment>
<dbReference type="EMBL" id="AL353770">
    <property type="status" value="NOT_ANNOTATED_CDS"/>
    <property type="molecule type" value="Genomic_DNA"/>
</dbReference>
<dbReference type="EMBL" id="AL080148">
    <property type="protein sequence ID" value="CAB45741.1"/>
    <property type="molecule type" value="mRNA"/>
</dbReference>
<dbReference type="CCDS" id="CCDS78400.1"/>
<dbReference type="PIR" id="T12532">
    <property type="entry name" value="T12532"/>
</dbReference>
<dbReference type="RefSeq" id="NP_001076593.1">
    <property type="nucleotide sequence ID" value="NM_001083124.1"/>
</dbReference>
<dbReference type="SMR" id="Q5VYP0"/>
<dbReference type="BioGRID" id="608274">
    <property type="interactions" value="2"/>
</dbReference>
<dbReference type="FunCoup" id="Q5VYP0">
    <property type="interactions" value="1"/>
</dbReference>
<dbReference type="iPTMnet" id="Q5VYP0"/>
<dbReference type="PhosphoSitePlus" id="Q5VYP0"/>
<dbReference type="BioMuta" id="SPATA31A3"/>
<dbReference type="DMDM" id="74747695"/>
<dbReference type="jPOST" id="Q5VYP0"/>
<dbReference type="MassIVE" id="Q5VYP0"/>
<dbReference type="PaxDb" id="9606-ENSP00000485118"/>
<dbReference type="PeptideAtlas" id="Q5VYP0"/>
<dbReference type="ProteomicsDB" id="65639"/>
<dbReference type="DNASU" id="727830"/>
<dbReference type="Ensembl" id="ENST00000428649.5">
    <property type="protein sequence ID" value="ENSP00000485118.1"/>
    <property type="gene ID" value="ENSG00000275969.3"/>
</dbReference>
<dbReference type="GeneID" id="727830"/>
<dbReference type="KEGG" id="hsa:727830"/>
<dbReference type="MANE-Select" id="ENST00000428649.5">
    <property type="protein sequence ID" value="ENSP00000485118.1"/>
    <property type="RefSeq nucleotide sequence ID" value="NM_001083124.1"/>
    <property type="RefSeq protein sequence ID" value="NP_001076593.1"/>
</dbReference>
<dbReference type="UCSC" id="uc010mmj.5">
    <property type="organism name" value="human"/>
</dbReference>
<dbReference type="AGR" id="HGNC:32003"/>
<dbReference type="CTD" id="727830"/>
<dbReference type="GeneCards" id="SPATA31A3"/>
<dbReference type="HGNC" id="HGNC:32003">
    <property type="gene designation" value="SPATA31A3"/>
</dbReference>
<dbReference type="HPA" id="ENSG00000275969">
    <property type="expression patterns" value="Tissue enriched (testis)"/>
</dbReference>
<dbReference type="neXtProt" id="NX_Q5VYP0"/>
<dbReference type="PharmGKB" id="PA162387867"/>
<dbReference type="VEuPathDB" id="HostDB:ENSG00000275969"/>
<dbReference type="eggNOG" id="ENOG502RU0E">
    <property type="taxonomic scope" value="Eukaryota"/>
</dbReference>
<dbReference type="GeneTree" id="ENSGT00950000183043"/>
<dbReference type="HOGENOM" id="CLU_005668_2_0_1"/>
<dbReference type="InParanoid" id="Q5VYP0"/>
<dbReference type="OMA" id="RWAYSSH"/>
<dbReference type="OrthoDB" id="9616581at2759"/>
<dbReference type="PAN-GO" id="Q5VYP0">
    <property type="GO annotations" value="0 GO annotations based on evolutionary models"/>
</dbReference>
<dbReference type="PhylomeDB" id="Q5VYP0"/>
<dbReference type="TreeFam" id="TF338531"/>
<dbReference type="PathwayCommons" id="Q5VYP0"/>
<dbReference type="SignaLink" id="Q5VYP0"/>
<dbReference type="BioGRID-ORCS" id="727830">
    <property type="hits" value="40 hits in 1002 CRISPR screens"/>
</dbReference>
<dbReference type="GenomeRNAi" id="727830"/>
<dbReference type="Pharos" id="Q5VYP0">
    <property type="development level" value="Tdark"/>
</dbReference>
<dbReference type="PRO" id="PR:Q5VYP0"/>
<dbReference type="Proteomes" id="UP000005640">
    <property type="component" value="Chromosome 9"/>
</dbReference>
<dbReference type="RNAct" id="Q5VYP0">
    <property type="molecule type" value="protein"/>
</dbReference>
<dbReference type="Bgee" id="ENSG00000275969">
    <property type="expression patterns" value="Expressed in right testis and 2 other cell types or tissues"/>
</dbReference>
<dbReference type="GO" id="GO:0016020">
    <property type="term" value="C:membrane"/>
    <property type="evidence" value="ECO:0007669"/>
    <property type="project" value="UniProtKB-SubCell"/>
</dbReference>
<dbReference type="GO" id="GO:0030154">
    <property type="term" value="P:cell differentiation"/>
    <property type="evidence" value="ECO:0007669"/>
    <property type="project" value="UniProtKB-KW"/>
</dbReference>
<dbReference type="GO" id="GO:0007283">
    <property type="term" value="P:spermatogenesis"/>
    <property type="evidence" value="ECO:0007669"/>
    <property type="project" value="UniProtKB-KW"/>
</dbReference>
<dbReference type="InterPro" id="IPR039509">
    <property type="entry name" value="SPATA31"/>
</dbReference>
<dbReference type="InterPro" id="IPR027970">
    <property type="entry name" value="SPATA31F3-like"/>
</dbReference>
<dbReference type="PANTHER" id="PTHR21859">
    <property type="entry name" value="ACROSOME-SPECIFIC PROTEIN"/>
    <property type="match status" value="1"/>
</dbReference>
<dbReference type="PANTHER" id="PTHR21859:SF55">
    <property type="entry name" value="SPERMATOGENESIS-ASSOCIATED PROTEIN 31A1-RELATED"/>
    <property type="match status" value="1"/>
</dbReference>
<dbReference type="Pfam" id="PF15371">
    <property type="entry name" value="DUF4599"/>
    <property type="match status" value="1"/>
</dbReference>
<dbReference type="Pfam" id="PF14650">
    <property type="entry name" value="FAM75"/>
    <property type="match status" value="1"/>
</dbReference>
<organism>
    <name type="scientific">Homo sapiens</name>
    <name type="common">Human</name>
    <dbReference type="NCBI Taxonomy" id="9606"/>
    <lineage>
        <taxon>Eukaryota</taxon>
        <taxon>Metazoa</taxon>
        <taxon>Chordata</taxon>
        <taxon>Craniata</taxon>
        <taxon>Vertebrata</taxon>
        <taxon>Euteleostomi</taxon>
        <taxon>Mammalia</taxon>
        <taxon>Eutheria</taxon>
        <taxon>Euarchontoglires</taxon>
        <taxon>Primates</taxon>
        <taxon>Haplorrhini</taxon>
        <taxon>Catarrhini</taxon>
        <taxon>Hominidae</taxon>
        <taxon>Homo</taxon>
    </lineage>
</organism>
<accession>Q5VYP0</accession>
<evidence type="ECO:0000250" key="1"/>
<evidence type="ECO:0000255" key="2"/>
<evidence type="ECO:0000256" key="3">
    <source>
        <dbReference type="SAM" id="MobiDB-lite"/>
    </source>
</evidence>
<evidence type="ECO:0000305" key="4"/>